<name>GAL1_ECOUT</name>
<accession>Q1REH4</accession>
<keyword id="KW-0067">ATP-binding</keyword>
<keyword id="KW-0119">Carbohydrate metabolism</keyword>
<keyword id="KW-0963">Cytoplasm</keyword>
<keyword id="KW-0299">Galactose metabolism</keyword>
<keyword id="KW-0418">Kinase</keyword>
<keyword id="KW-0460">Magnesium</keyword>
<keyword id="KW-0479">Metal-binding</keyword>
<keyword id="KW-0547">Nucleotide-binding</keyword>
<keyword id="KW-0808">Transferase</keyword>
<comment type="function">
    <text evidence="1">Catalyzes the transfer of the gamma-phosphate of ATP to D-galactose to form alpha-D-galactose-1-phosphate (Gal-1-P).</text>
</comment>
<comment type="catalytic activity">
    <reaction evidence="1">
        <text>alpha-D-galactose + ATP = alpha-D-galactose 1-phosphate + ADP + H(+)</text>
        <dbReference type="Rhea" id="RHEA:13553"/>
        <dbReference type="ChEBI" id="CHEBI:15378"/>
        <dbReference type="ChEBI" id="CHEBI:28061"/>
        <dbReference type="ChEBI" id="CHEBI:30616"/>
        <dbReference type="ChEBI" id="CHEBI:58336"/>
        <dbReference type="ChEBI" id="CHEBI:456216"/>
        <dbReference type="EC" id="2.7.1.6"/>
    </reaction>
</comment>
<comment type="pathway">
    <text evidence="1">Carbohydrate metabolism; galactose metabolism.</text>
</comment>
<comment type="subcellular location">
    <subcellularLocation>
        <location evidence="1">Cytoplasm</location>
    </subcellularLocation>
</comment>
<comment type="similarity">
    <text evidence="1">Belongs to the GHMP kinase family. GalK subfamily.</text>
</comment>
<gene>
    <name evidence="1" type="primary">galK</name>
    <name type="ordered locus">UTI89_C0754</name>
</gene>
<sequence>MSLKEKTQSLFANAFGYPATHTIQAPGRVNLIGEHTDYNDGFVLPCAIDYQTVISCAPRDDRKVRVMAADYENQLDEFSLDAPIVAHENYQWANYVRGVVKHLQLRNNSFGGVDMVISGNVPQGAGLSSSASLEVAVGTVLQQLYHLPLDGAQIALNGQEAENQFVGCNCGIMDQLISALGKKDHALLIDCRSLGTKAVSMPKGVAVVIINSNFKRTLVGSEYNTRREQCETGARFFQQPALRDVTIEEFNAVAHELDPIVAKRVRHILTENARTVEAASALEQGDLKRMGELMAESHASMRDDFEITVPQIDTLVEIVKAVIGDKGGVRMTGGGFGGCIVALFPEELVPAVQQAVAEQYEAKTGIKETFYVCKPSQGAGQC</sequence>
<feature type="chain" id="PRO_1000005750" description="Galactokinase">
    <location>
        <begin position="1"/>
        <end position="382"/>
    </location>
</feature>
<feature type="active site" description="Proton acceptor" evidence="1">
    <location>
        <position position="174"/>
    </location>
</feature>
<feature type="binding site" evidence="1">
    <location>
        <begin position="34"/>
        <end position="37"/>
    </location>
    <ligand>
        <name>substrate</name>
    </ligand>
</feature>
<feature type="binding site" evidence="1">
    <location>
        <begin position="124"/>
        <end position="130"/>
    </location>
    <ligand>
        <name>ATP</name>
        <dbReference type="ChEBI" id="CHEBI:30616"/>
    </ligand>
</feature>
<feature type="binding site" evidence="1">
    <location>
        <position position="130"/>
    </location>
    <ligand>
        <name>Mg(2+)</name>
        <dbReference type="ChEBI" id="CHEBI:18420"/>
    </ligand>
</feature>
<feature type="binding site" evidence="1">
    <location>
        <position position="162"/>
    </location>
    <ligand>
        <name>Mg(2+)</name>
        <dbReference type="ChEBI" id="CHEBI:18420"/>
    </ligand>
</feature>
<feature type="binding site" evidence="1">
    <location>
        <position position="223"/>
    </location>
    <ligand>
        <name>substrate</name>
    </ligand>
</feature>
<feature type="site" description="Transition state stabilizer" evidence="1">
    <location>
        <position position="28"/>
    </location>
</feature>
<protein>
    <recommendedName>
        <fullName evidence="1">Galactokinase</fullName>
        <ecNumber evidence="1">2.7.1.6</ecNumber>
    </recommendedName>
    <alternativeName>
        <fullName evidence="1">Galactose kinase</fullName>
    </alternativeName>
</protein>
<evidence type="ECO:0000255" key="1">
    <source>
        <dbReference type="HAMAP-Rule" id="MF_00246"/>
    </source>
</evidence>
<reference key="1">
    <citation type="journal article" date="2006" name="Proc. Natl. Acad. Sci. U.S.A.">
        <title>Identification of genes subject to positive selection in uropathogenic strains of Escherichia coli: a comparative genomics approach.</title>
        <authorList>
            <person name="Chen S.L."/>
            <person name="Hung C.-S."/>
            <person name="Xu J."/>
            <person name="Reigstad C.S."/>
            <person name="Magrini V."/>
            <person name="Sabo A."/>
            <person name="Blasiar D."/>
            <person name="Bieri T."/>
            <person name="Meyer R.R."/>
            <person name="Ozersky P."/>
            <person name="Armstrong J.R."/>
            <person name="Fulton R.S."/>
            <person name="Latreille J.P."/>
            <person name="Spieth J."/>
            <person name="Hooton T.M."/>
            <person name="Mardis E.R."/>
            <person name="Hultgren S.J."/>
            <person name="Gordon J.I."/>
        </authorList>
    </citation>
    <scope>NUCLEOTIDE SEQUENCE [LARGE SCALE GENOMIC DNA]</scope>
    <source>
        <strain>UTI89 / UPEC</strain>
    </source>
</reference>
<proteinExistence type="inferred from homology"/>
<organism>
    <name type="scientific">Escherichia coli (strain UTI89 / UPEC)</name>
    <dbReference type="NCBI Taxonomy" id="364106"/>
    <lineage>
        <taxon>Bacteria</taxon>
        <taxon>Pseudomonadati</taxon>
        <taxon>Pseudomonadota</taxon>
        <taxon>Gammaproteobacteria</taxon>
        <taxon>Enterobacterales</taxon>
        <taxon>Enterobacteriaceae</taxon>
        <taxon>Escherichia</taxon>
    </lineage>
</organism>
<dbReference type="EC" id="2.7.1.6" evidence="1"/>
<dbReference type="EMBL" id="CP000243">
    <property type="protein sequence ID" value="ABE06240.1"/>
    <property type="molecule type" value="Genomic_DNA"/>
</dbReference>
<dbReference type="RefSeq" id="WP_000053414.1">
    <property type="nucleotide sequence ID" value="NZ_CP064825.1"/>
</dbReference>
<dbReference type="SMR" id="Q1REH4"/>
<dbReference type="KEGG" id="eci:UTI89_C0754"/>
<dbReference type="HOGENOM" id="CLU_017814_2_1_6"/>
<dbReference type="UniPathway" id="UPA00214"/>
<dbReference type="Proteomes" id="UP000001952">
    <property type="component" value="Chromosome"/>
</dbReference>
<dbReference type="GO" id="GO:0005829">
    <property type="term" value="C:cytosol"/>
    <property type="evidence" value="ECO:0007669"/>
    <property type="project" value="TreeGrafter"/>
</dbReference>
<dbReference type="GO" id="GO:0005524">
    <property type="term" value="F:ATP binding"/>
    <property type="evidence" value="ECO:0007669"/>
    <property type="project" value="UniProtKB-UniRule"/>
</dbReference>
<dbReference type="GO" id="GO:0004335">
    <property type="term" value="F:galactokinase activity"/>
    <property type="evidence" value="ECO:0007669"/>
    <property type="project" value="UniProtKB-UniRule"/>
</dbReference>
<dbReference type="GO" id="GO:0000287">
    <property type="term" value="F:magnesium ion binding"/>
    <property type="evidence" value="ECO:0007669"/>
    <property type="project" value="UniProtKB-UniRule"/>
</dbReference>
<dbReference type="GO" id="GO:0006012">
    <property type="term" value="P:galactose metabolic process"/>
    <property type="evidence" value="ECO:0007669"/>
    <property type="project" value="UniProtKB-UniRule"/>
</dbReference>
<dbReference type="FunFam" id="3.30.230.10:FF:000017">
    <property type="entry name" value="Galactokinase"/>
    <property type="match status" value="1"/>
</dbReference>
<dbReference type="FunFam" id="3.30.70.890:FF:000001">
    <property type="entry name" value="Galactokinase"/>
    <property type="match status" value="1"/>
</dbReference>
<dbReference type="Gene3D" id="3.30.230.10">
    <property type="match status" value="1"/>
</dbReference>
<dbReference type="Gene3D" id="3.30.70.890">
    <property type="entry name" value="GHMP kinase, C-terminal domain"/>
    <property type="match status" value="1"/>
</dbReference>
<dbReference type="HAMAP" id="MF_00246">
    <property type="entry name" value="Galactokinase"/>
    <property type="match status" value="1"/>
</dbReference>
<dbReference type="InterPro" id="IPR000705">
    <property type="entry name" value="Galactokinase"/>
</dbReference>
<dbReference type="InterPro" id="IPR022963">
    <property type="entry name" value="Galactokinase_bac"/>
</dbReference>
<dbReference type="InterPro" id="IPR019741">
    <property type="entry name" value="Galactokinase_CS"/>
</dbReference>
<dbReference type="InterPro" id="IPR019539">
    <property type="entry name" value="GalKase_N"/>
</dbReference>
<dbReference type="InterPro" id="IPR013750">
    <property type="entry name" value="GHMP_kinase_C_dom"/>
</dbReference>
<dbReference type="InterPro" id="IPR036554">
    <property type="entry name" value="GHMP_kinase_C_sf"/>
</dbReference>
<dbReference type="InterPro" id="IPR006204">
    <property type="entry name" value="GHMP_kinase_N_dom"/>
</dbReference>
<dbReference type="InterPro" id="IPR006203">
    <property type="entry name" value="GHMP_knse_ATP-bd_CS"/>
</dbReference>
<dbReference type="InterPro" id="IPR006206">
    <property type="entry name" value="Mevalonate/galactokinase"/>
</dbReference>
<dbReference type="InterPro" id="IPR020568">
    <property type="entry name" value="Ribosomal_Su5_D2-typ_SF"/>
</dbReference>
<dbReference type="InterPro" id="IPR014721">
    <property type="entry name" value="Ribsml_uS5_D2-typ_fold_subgr"/>
</dbReference>
<dbReference type="NCBIfam" id="TIGR00131">
    <property type="entry name" value="gal_kin"/>
    <property type="match status" value="1"/>
</dbReference>
<dbReference type="NCBIfam" id="NF003472">
    <property type="entry name" value="PRK05101.1"/>
    <property type="match status" value="1"/>
</dbReference>
<dbReference type="PANTHER" id="PTHR10457:SF7">
    <property type="entry name" value="GALACTOKINASE-RELATED"/>
    <property type="match status" value="1"/>
</dbReference>
<dbReference type="PANTHER" id="PTHR10457">
    <property type="entry name" value="MEVALONATE KINASE/GALACTOKINASE"/>
    <property type="match status" value="1"/>
</dbReference>
<dbReference type="Pfam" id="PF10509">
    <property type="entry name" value="GalKase_gal_bdg"/>
    <property type="match status" value="1"/>
</dbReference>
<dbReference type="Pfam" id="PF08544">
    <property type="entry name" value="GHMP_kinases_C"/>
    <property type="match status" value="1"/>
</dbReference>
<dbReference type="Pfam" id="PF00288">
    <property type="entry name" value="GHMP_kinases_N"/>
    <property type="match status" value="1"/>
</dbReference>
<dbReference type="PIRSF" id="PIRSF000530">
    <property type="entry name" value="Galactokinase"/>
    <property type="match status" value="1"/>
</dbReference>
<dbReference type="PRINTS" id="PR00473">
    <property type="entry name" value="GALCTOKINASE"/>
</dbReference>
<dbReference type="PRINTS" id="PR00959">
    <property type="entry name" value="MEVGALKINASE"/>
</dbReference>
<dbReference type="SUPFAM" id="SSF55060">
    <property type="entry name" value="GHMP Kinase, C-terminal domain"/>
    <property type="match status" value="1"/>
</dbReference>
<dbReference type="SUPFAM" id="SSF54211">
    <property type="entry name" value="Ribosomal protein S5 domain 2-like"/>
    <property type="match status" value="1"/>
</dbReference>
<dbReference type="PROSITE" id="PS00106">
    <property type="entry name" value="GALACTOKINASE"/>
    <property type="match status" value="1"/>
</dbReference>
<dbReference type="PROSITE" id="PS00627">
    <property type="entry name" value="GHMP_KINASES_ATP"/>
    <property type="match status" value="1"/>
</dbReference>